<comment type="function">
    <text evidence="1">Modulates the synthesis of GlmS, by affecting the processing and stability of the regulatory small RNA GlmZ. When glucosamine-6-phosphate (GlcN6P) concentrations are high in the cell, RapZ binds GlmZ and targets it to cleavage by RNase E. Consequently, GlmZ is inactivated and unable to activate GlmS synthesis. Under low GlcN6P concentrations, RapZ is sequestered and inactivated by an other regulatory small RNA, GlmY, preventing GlmZ degradation and leading to synthesis of GlmS.</text>
</comment>
<comment type="subunit">
    <text evidence="1">Homotrimer.</text>
</comment>
<comment type="similarity">
    <text evidence="1">Belongs to the RapZ-like family. RapZ subfamily.</text>
</comment>
<feature type="chain" id="PRO_1000130764" description="RNase adapter protein RapZ">
    <location>
        <begin position="1"/>
        <end position="284"/>
    </location>
</feature>
<feature type="region of interest" description="RNA-binding" evidence="1">
    <location>
        <begin position="266"/>
        <end position="284"/>
    </location>
</feature>
<feature type="binding site" evidence="1">
    <location>
        <begin position="8"/>
        <end position="15"/>
    </location>
    <ligand>
        <name>ATP</name>
        <dbReference type="ChEBI" id="CHEBI:30616"/>
    </ligand>
</feature>
<feature type="binding site" evidence="1">
    <location>
        <begin position="56"/>
        <end position="59"/>
    </location>
    <ligand>
        <name>GTP</name>
        <dbReference type="ChEBI" id="CHEBI:37565"/>
    </ligand>
</feature>
<protein>
    <recommendedName>
        <fullName evidence="1">RNase adapter protein RapZ</fullName>
    </recommendedName>
</protein>
<organism>
    <name type="scientific">Klebsiella pneumoniae (strain 342)</name>
    <dbReference type="NCBI Taxonomy" id="507522"/>
    <lineage>
        <taxon>Bacteria</taxon>
        <taxon>Pseudomonadati</taxon>
        <taxon>Pseudomonadota</taxon>
        <taxon>Gammaproteobacteria</taxon>
        <taxon>Enterobacterales</taxon>
        <taxon>Enterobacteriaceae</taxon>
        <taxon>Klebsiella/Raoultella group</taxon>
        <taxon>Klebsiella</taxon>
        <taxon>Klebsiella pneumoniae complex</taxon>
    </lineage>
</organism>
<reference key="1">
    <citation type="journal article" date="2008" name="PLoS Genet.">
        <title>Complete genome sequence of the N2-fixing broad host range endophyte Klebsiella pneumoniae 342 and virulence predictions verified in mice.</title>
        <authorList>
            <person name="Fouts D.E."/>
            <person name="Tyler H.L."/>
            <person name="DeBoy R.T."/>
            <person name="Daugherty S."/>
            <person name="Ren Q."/>
            <person name="Badger J.H."/>
            <person name="Durkin A.S."/>
            <person name="Huot H."/>
            <person name="Shrivastava S."/>
            <person name="Kothari S."/>
            <person name="Dodson R.J."/>
            <person name="Mohamoud Y."/>
            <person name="Khouri H."/>
            <person name="Roesch L.F.W."/>
            <person name="Krogfelt K.A."/>
            <person name="Struve C."/>
            <person name="Triplett E.W."/>
            <person name="Methe B.A."/>
        </authorList>
    </citation>
    <scope>NUCLEOTIDE SEQUENCE [LARGE SCALE GENOMIC DNA]</scope>
    <source>
        <strain>342</strain>
    </source>
</reference>
<dbReference type="EMBL" id="CP000964">
    <property type="protein sequence ID" value="ACI09450.1"/>
    <property type="molecule type" value="Genomic_DNA"/>
</dbReference>
<dbReference type="SMR" id="B5XST6"/>
<dbReference type="KEGG" id="kpe:KPK_0506"/>
<dbReference type="HOGENOM" id="CLU_059558_1_1_6"/>
<dbReference type="Proteomes" id="UP000001734">
    <property type="component" value="Chromosome"/>
</dbReference>
<dbReference type="GO" id="GO:0005524">
    <property type="term" value="F:ATP binding"/>
    <property type="evidence" value="ECO:0007669"/>
    <property type="project" value="UniProtKB-UniRule"/>
</dbReference>
<dbReference type="GO" id="GO:0005525">
    <property type="term" value="F:GTP binding"/>
    <property type="evidence" value="ECO:0007669"/>
    <property type="project" value="UniProtKB-UniRule"/>
</dbReference>
<dbReference type="GO" id="GO:0003723">
    <property type="term" value="F:RNA binding"/>
    <property type="evidence" value="ECO:0007669"/>
    <property type="project" value="UniProtKB-KW"/>
</dbReference>
<dbReference type="Gene3D" id="3.40.50.300">
    <property type="entry name" value="P-loop containing nucleotide triphosphate hydrolases"/>
    <property type="match status" value="1"/>
</dbReference>
<dbReference type="HAMAP" id="MF_00636">
    <property type="entry name" value="RapZ_like"/>
    <property type="match status" value="1"/>
</dbReference>
<dbReference type="InterPro" id="IPR027417">
    <property type="entry name" value="P-loop_NTPase"/>
</dbReference>
<dbReference type="InterPro" id="IPR005337">
    <property type="entry name" value="RapZ-like"/>
</dbReference>
<dbReference type="InterPro" id="IPR053930">
    <property type="entry name" value="RapZ-like_N"/>
</dbReference>
<dbReference type="InterPro" id="IPR053931">
    <property type="entry name" value="RapZ_C"/>
</dbReference>
<dbReference type="NCBIfam" id="NF003828">
    <property type="entry name" value="PRK05416.1"/>
    <property type="match status" value="1"/>
</dbReference>
<dbReference type="PANTHER" id="PTHR30448">
    <property type="entry name" value="RNASE ADAPTER PROTEIN RAPZ"/>
    <property type="match status" value="1"/>
</dbReference>
<dbReference type="PANTHER" id="PTHR30448:SF0">
    <property type="entry name" value="RNASE ADAPTER PROTEIN RAPZ"/>
    <property type="match status" value="1"/>
</dbReference>
<dbReference type="Pfam" id="PF22740">
    <property type="entry name" value="PapZ_C"/>
    <property type="match status" value="1"/>
</dbReference>
<dbReference type="Pfam" id="PF03668">
    <property type="entry name" value="RapZ-like_N"/>
    <property type="match status" value="1"/>
</dbReference>
<dbReference type="PIRSF" id="PIRSF005052">
    <property type="entry name" value="P-loopkin"/>
    <property type="match status" value="1"/>
</dbReference>
<dbReference type="SUPFAM" id="SSF52540">
    <property type="entry name" value="P-loop containing nucleoside triphosphate hydrolases"/>
    <property type="match status" value="1"/>
</dbReference>
<evidence type="ECO:0000255" key="1">
    <source>
        <dbReference type="HAMAP-Rule" id="MF_00636"/>
    </source>
</evidence>
<gene>
    <name evidence="1" type="primary">rapZ</name>
    <name type="ordered locus">KPK_0506</name>
</gene>
<name>RAPZ_KLEP3</name>
<keyword id="KW-0067">ATP-binding</keyword>
<keyword id="KW-0342">GTP-binding</keyword>
<keyword id="KW-0547">Nucleotide-binding</keyword>
<keyword id="KW-0694">RNA-binding</keyword>
<accession>B5XST6</accession>
<sequence length="284" mass="32541">MVLMIVSGRSGSGKSVALRALEDMGFYCVDNLPVVLLPDLARSLADRNISAAVSIDVRNMPESPEIFEQAMQNLPECFSPQLLFLDADRNTLIRRYSDTRRLHPLSSKNLSLESAIDEESDLLEPLRSRADLIVDTSEMSVHELAEMLRTRLLGKRERELTMVFESFGFKHGIPIDADYVFDVRFLPNPHWDPKLRPMTGLDKPVAAFLDRHTEVHNFIYQTRSYLELWLPMLETNNRSYLTVAIGCTGGKHRSVYIAEQLADYFRSRGKNVQSRHRTLEKRKS</sequence>
<proteinExistence type="inferred from homology"/>